<organism>
    <name type="scientific">Mus musculus</name>
    <name type="common">Mouse</name>
    <dbReference type="NCBI Taxonomy" id="10090"/>
    <lineage>
        <taxon>Eukaryota</taxon>
        <taxon>Metazoa</taxon>
        <taxon>Chordata</taxon>
        <taxon>Craniata</taxon>
        <taxon>Vertebrata</taxon>
        <taxon>Euteleostomi</taxon>
        <taxon>Mammalia</taxon>
        <taxon>Eutheria</taxon>
        <taxon>Euarchontoglires</taxon>
        <taxon>Glires</taxon>
        <taxon>Rodentia</taxon>
        <taxon>Myomorpha</taxon>
        <taxon>Muroidea</taxon>
        <taxon>Muridae</taxon>
        <taxon>Murinae</taxon>
        <taxon>Mus</taxon>
        <taxon>Mus</taxon>
    </lineage>
</organism>
<evidence type="ECO:0000255" key="1"/>
<evidence type="ECO:0000269" key="2">
    <source>
    </source>
</evidence>
<evidence type="ECO:0000269" key="3">
    <source>
    </source>
</evidence>
<evidence type="ECO:0000269" key="4">
    <source>
    </source>
</evidence>
<evidence type="ECO:0000269" key="5">
    <source>
    </source>
</evidence>
<evidence type="ECO:0000269" key="6">
    <source>
    </source>
</evidence>
<evidence type="ECO:0000305" key="7"/>
<evidence type="ECO:0000312" key="8">
    <source>
        <dbReference type="MGI" id="MGI:2443988"/>
    </source>
</evidence>
<evidence type="ECO:0007744" key="9">
    <source>
        <dbReference type="PDB" id="7EEB"/>
    </source>
</evidence>
<evidence type="ECO:0007829" key="10">
    <source>
        <dbReference type="PDB" id="7EEB"/>
    </source>
</evidence>
<reference key="1">
    <citation type="journal article" date="2007" name="J. Biol. Chem.">
        <title>CatSperbeta, a novel transmembrane protein in the CatSper channel complex.</title>
        <authorList>
            <person name="Liu J."/>
            <person name="Xia J."/>
            <person name="Cho K.-H."/>
            <person name="Clapham D.E."/>
            <person name="Ren D."/>
        </authorList>
    </citation>
    <scope>NUCLEOTIDE SEQUENCE [MRNA]</scope>
    <scope>IDENTIFICATION BY MASS SPECTROMETRY</scope>
    <scope>IDENTIFICATION IN A COMPLEX WITH CATSPER1 AND HSPA1B</scope>
    <scope>TISSUE SPECIFICITY</scope>
    <scope>FUNCTION</scope>
    <source>
        <strain>BALB/cJ</strain>
    </source>
</reference>
<reference key="2">
    <citation type="journal article" date="2005" name="Science">
        <title>The transcriptional landscape of the mammalian genome.</title>
        <authorList>
            <person name="Carninci P."/>
            <person name="Kasukawa T."/>
            <person name="Katayama S."/>
            <person name="Gough J."/>
            <person name="Frith M.C."/>
            <person name="Maeda N."/>
            <person name="Oyama R."/>
            <person name="Ravasi T."/>
            <person name="Lenhard B."/>
            <person name="Wells C."/>
            <person name="Kodzius R."/>
            <person name="Shimokawa K."/>
            <person name="Bajic V.B."/>
            <person name="Brenner S.E."/>
            <person name="Batalov S."/>
            <person name="Forrest A.R."/>
            <person name="Zavolan M."/>
            <person name="Davis M.J."/>
            <person name="Wilming L.G."/>
            <person name="Aidinis V."/>
            <person name="Allen J.E."/>
            <person name="Ambesi-Impiombato A."/>
            <person name="Apweiler R."/>
            <person name="Aturaliya R.N."/>
            <person name="Bailey T.L."/>
            <person name="Bansal M."/>
            <person name="Baxter L."/>
            <person name="Beisel K.W."/>
            <person name="Bersano T."/>
            <person name="Bono H."/>
            <person name="Chalk A.M."/>
            <person name="Chiu K.P."/>
            <person name="Choudhary V."/>
            <person name="Christoffels A."/>
            <person name="Clutterbuck D.R."/>
            <person name="Crowe M.L."/>
            <person name="Dalla E."/>
            <person name="Dalrymple B.P."/>
            <person name="de Bono B."/>
            <person name="Della Gatta G."/>
            <person name="di Bernardo D."/>
            <person name="Down T."/>
            <person name="Engstrom P."/>
            <person name="Fagiolini M."/>
            <person name="Faulkner G."/>
            <person name="Fletcher C.F."/>
            <person name="Fukushima T."/>
            <person name="Furuno M."/>
            <person name="Futaki S."/>
            <person name="Gariboldi M."/>
            <person name="Georgii-Hemming P."/>
            <person name="Gingeras T.R."/>
            <person name="Gojobori T."/>
            <person name="Green R.E."/>
            <person name="Gustincich S."/>
            <person name="Harbers M."/>
            <person name="Hayashi Y."/>
            <person name="Hensch T.K."/>
            <person name="Hirokawa N."/>
            <person name="Hill D."/>
            <person name="Huminiecki L."/>
            <person name="Iacono M."/>
            <person name="Ikeo K."/>
            <person name="Iwama A."/>
            <person name="Ishikawa T."/>
            <person name="Jakt M."/>
            <person name="Kanapin A."/>
            <person name="Katoh M."/>
            <person name="Kawasawa Y."/>
            <person name="Kelso J."/>
            <person name="Kitamura H."/>
            <person name="Kitano H."/>
            <person name="Kollias G."/>
            <person name="Krishnan S.P."/>
            <person name="Kruger A."/>
            <person name="Kummerfeld S.K."/>
            <person name="Kurochkin I.V."/>
            <person name="Lareau L.F."/>
            <person name="Lazarevic D."/>
            <person name="Lipovich L."/>
            <person name="Liu J."/>
            <person name="Liuni S."/>
            <person name="McWilliam S."/>
            <person name="Madan Babu M."/>
            <person name="Madera M."/>
            <person name="Marchionni L."/>
            <person name="Matsuda H."/>
            <person name="Matsuzawa S."/>
            <person name="Miki H."/>
            <person name="Mignone F."/>
            <person name="Miyake S."/>
            <person name="Morris K."/>
            <person name="Mottagui-Tabar S."/>
            <person name="Mulder N."/>
            <person name="Nakano N."/>
            <person name="Nakauchi H."/>
            <person name="Ng P."/>
            <person name="Nilsson R."/>
            <person name="Nishiguchi S."/>
            <person name="Nishikawa S."/>
            <person name="Nori F."/>
            <person name="Ohara O."/>
            <person name="Okazaki Y."/>
            <person name="Orlando V."/>
            <person name="Pang K.C."/>
            <person name="Pavan W.J."/>
            <person name="Pavesi G."/>
            <person name="Pesole G."/>
            <person name="Petrovsky N."/>
            <person name="Piazza S."/>
            <person name="Reed J."/>
            <person name="Reid J.F."/>
            <person name="Ring B.Z."/>
            <person name="Ringwald M."/>
            <person name="Rost B."/>
            <person name="Ruan Y."/>
            <person name="Salzberg S.L."/>
            <person name="Sandelin A."/>
            <person name="Schneider C."/>
            <person name="Schoenbach C."/>
            <person name="Sekiguchi K."/>
            <person name="Semple C.A."/>
            <person name="Seno S."/>
            <person name="Sessa L."/>
            <person name="Sheng Y."/>
            <person name="Shibata Y."/>
            <person name="Shimada H."/>
            <person name="Shimada K."/>
            <person name="Silva D."/>
            <person name="Sinclair B."/>
            <person name="Sperling S."/>
            <person name="Stupka E."/>
            <person name="Sugiura K."/>
            <person name="Sultana R."/>
            <person name="Takenaka Y."/>
            <person name="Taki K."/>
            <person name="Tammoja K."/>
            <person name="Tan S.L."/>
            <person name="Tang S."/>
            <person name="Taylor M.S."/>
            <person name="Tegner J."/>
            <person name="Teichmann S.A."/>
            <person name="Ueda H.R."/>
            <person name="van Nimwegen E."/>
            <person name="Verardo R."/>
            <person name="Wei C.L."/>
            <person name="Yagi K."/>
            <person name="Yamanishi H."/>
            <person name="Zabarovsky E."/>
            <person name="Zhu S."/>
            <person name="Zimmer A."/>
            <person name="Hide W."/>
            <person name="Bult C."/>
            <person name="Grimmond S.M."/>
            <person name="Teasdale R.D."/>
            <person name="Liu E.T."/>
            <person name="Brusic V."/>
            <person name="Quackenbush J."/>
            <person name="Wahlestedt C."/>
            <person name="Mattick J.S."/>
            <person name="Hume D.A."/>
            <person name="Kai C."/>
            <person name="Sasaki D."/>
            <person name="Tomaru Y."/>
            <person name="Fukuda S."/>
            <person name="Kanamori-Katayama M."/>
            <person name="Suzuki M."/>
            <person name="Aoki J."/>
            <person name="Arakawa T."/>
            <person name="Iida J."/>
            <person name="Imamura K."/>
            <person name="Itoh M."/>
            <person name="Kato T."/>
            <person name="Kawaji H."/>
            <person name="Kawagashira N."/>
            <person name="Kawashima T."/>
            <person name="Kojima M."/>
            <person name="Kondo S."/>
            <person name="Konno H."/>
            <person name="Nakano K."/>
            <person name="Ninomiya N."/>
            <person name="Nishio T."/>
            <person name="Okada M."/>
            <person name="Plessy C."/>
            <person name="Shibata K."/>
            <person name="Shiraki T."/>
            <person name="Suzuki S."/>
            <person name="Tagami M."/>
            <person name="Waki K."/>
            <person name="Watahiki A."/>
            <person name="Okamura-Oho Y."/>
            <person name="Suzuki H."/>
            <person name="Kawai J."/>
            <person name="Hayashizaki Y."/>
        </authorList>
    </citation>
    <scope>NUCLEOTIDE SEQUENCE [LARGE SCALE MRNA]</scope>
    <source>
        <strain>C57BL/6J</strain>
        <tissue>Testis</tissue>
    </source>
</reference>
<reference key="3">
    <citation type="journal article" date="2004" name="Genome Res.">
        <title>The status, quality, and expansion of the NIH full-length cDNA project: the Mammalian Gene Collection (MGC).</title>
        <authorList>
            <consortium name="The MGC Project Team"/>
        </authorList>
    </citation>
    <scope>NUCLEOTIDE SEQUENCE [LARGE SCALE MRNA]</scope>
</reference>
<reference key="4">
    <citation type="journal article" date="2009" name="Biol. Reprod.">
        <title>A novel, single, transmembrane protein CATSPERG is associated with CATSPER1 channel protein.</title>
        <authorList>
            <person name="Wang H."/>
            <person name="Liu J."/>
            <person name="Cho K.-H."/>
            <person name="Ren D."/>
        </authorList>
    </citation>
    <scope>IDENTIFICATION IN A COMPLEX WITH CATSPER1; CATSPERG2 AND HSPA1B</scope>
</reference>
<reference key="5">
    <citation type="journal article" date="2010" name="Cell">
        <title>A tissue-specific atlas of mouse protein phosphorylation and expression.</title>
        <authorList>
            <person name="Huttlin E.L."/>
            <person name="Jedrychowski M.P."/>
            <person name="Elias J.E."/>
            <person name="Goswami T."/>
            <person name="Rad R."/>
            <person name="Beausoleil S.A."/>
            <person name="Villen J."/>
            <person name="Haas W."/>
            <person name="Sowa M.E."/>
            <person name="Gygi S.P."/>
        </authorList>
    </citation>
    <scope>IDENTIFICATION BY MASS SPECTROMETRY [LARGE SCALE ANALYSIS]</scope>
    <source>
        <tissue>Testis</tissue>
    </source>
</reference>
<reference key="6">
    <citation type="journal article" date="2011" name="Nat. Commun.">
        <title>A novel gene required for male fertility and functional CATSPER channel formation in spermatozoa.</title>
        <authorList>
            <person name="Chung J.J."/>
            <person name="Navarro B."/>
            <person name="Krapivinsky G."/>
            <person name="Krapivinsky L."/>
            <person name="Clapham D.E."/>
        </authorList>
    </citation>
    <scope>IDENTIFICATION IN THE CATSPER COMPLEX</scope>
    <source>
        <strain>C57BL/6J</strain>
    </source>
</reference>
<reference key="7">
    <citation type="journal article" date="2022" name="Cell Rep.">
        <title>C2cd6-encoded CatSpertau targets sperm calcium channel to Ca2+ signaling domains in the flagellar membrane.</title>
        <authorList>
            <person name="Hwang J.Y."/>
            <person name="Wang H."/>
            <person name="Lu Y."/>
            <person name="Ikawa M."/>
            <person name="Chung J.J."/>
        </authorList>
    </citation>
    <scope>IDENTIFICATION IN THE CATSPER COMPLEX</scope>
</reference>
<reference key="8">
    <citation type="journal article" date="2021" name="Nature">
        <title>Structure of a mammalian sperm cation channel complex.</title>
        <authorList>
            <person name="Lin S."/>
            <person name="Ke M."/>
            <person name="Zhang Y."/>
            <person name="Yan Z."/>
            <person name="Wu J."/>
        </authorList>
    </citation>
    <scope>STRUCTURE BY ELECTRON MICROSCOPY (2.9 ANGSTROMS) OF THE CATSPER COMPLEX</scope>
    <scope>IDENTIFICATION BY MASS SPECTROMETRY</scope>
    <scope>FUNCTION</scope>
    <scope>SUBCELLULAR LOCATION</scope>
    <scope>TRANSMEMBRANE DOMAIN</scope>
    <scope>TOPOLOGY</scope>
    <scope>DISULFIDE BONDS</scope>
    <scope>GLYCOSYLATION AT ASN-90; ASN-118; ASN-672; ASN-915; ASN-923 AND ASN-1017</scope>
</reference>
<feature type="chain" id="PRO_0000295703" description="Cation channel sperm-associated auxiliary subunit beta">
    <location>
        <begin position="1"/>
        <end position="1109"/>
    </location>
</feature>
<feature type="topological domain" description="Extracellular" evidence="5">
    <location>
        <begin position="1"/>
        <end position="1055"/>
    </location>
</feature>
<feature type="transmembrane region" description="Helical" evidence="5">
    <location>
        <begin position="1056"/>
        <end position="1078"/>
    </location>
</feature>
<feature type="topological domain" description="Cytoplasmic" evidence="5">
    <location>
        <begin position="1079"/>
        <end position="1109"/>
    </location>
</feature>
<feature type="glycosylation site" description="N-linked (GlcNAc...) asparagine" evidence="1">
    <location>
        <position position="66"/>
    </location>
</feature>
<feature type="glycosylation site" description="N-linked (GlcNAc...) asparagine" evidence="5">
    <location>
        <position position="90"/>
    </location>
</feature>
<feature type="glycosylation site" description="N-linked (GlcNAc...) asparagine" evidence="5">
    <location>
        <position position="118"/>
    </location>
</feature>
<feature type="glycosylation site" description="N-linked (GlcNAc...) asparagine" evidence="1">
    <location>
        <position position="321"/>
    </location>
</feature>
<feature type="glycosylation site" description="N-linked (GlcNAc...) asparagine" evidence="5">
    <location>
        <position position="672"/>
    </location>
</feature>
<feature type="glycosylation site" description="N-linked (GlcNAc...) asparagine" evidence="5">
    <location>
        <position position="915"/>
    </location>
</feature>
<feature type="glycosylation site" description="N-linked (GlcNAc...) asparagine" evidence="5">
    <location>
        <position position="923"/>
    </location>
</feature>
<feature type="glycosylation site" description="N-linked (GlcNAc...) asparagine" evidence="5">
    <location>
        <position position="1017"/>
    </location>
</feature>
<feature type="disulfide bond" evidence="5 9">
    <location>
        <begin position="35"/>
        <end position="60"/>
    </location>
</feature>
<feature type="disulfide bond" evidence="5 9">
    <location>
        <begin position="189"/>
        <end position="302"/>
    </location>
</feature>
<feature type="disulfide bond" evidence="5 9">
    <location>
        <begin position="330"/>
        <end position="343"/>
    </location>
</feature>
<feature type="disulfide bond" evidence="5 9">
    <location>
        <begin position="720"/>
        <end position="818"/>
    </location>
</feature>
<feature type="disulfide bond" evidence="5 9">
    <location>
        <begin position="831"/>
        <end position="1039"/>
    </location>
</feature>
<feature type="disulfide bond" evidence="5 9">
    <location>
        <begin position="913"/>
        <end position="922"/>
    </location>
</feature>
<feature type="disulfide bond" evidence="5 9">
    <location>
        <begin position="924"/>
        <end position="939"/>
    </location>
</feature>
<feature type="sequence conflict" description="In Ref. 2; BAC26731." evidence="7" ref="2">
    <original>D</original>
    <variation>G</variation>
    <location>
        <position position="792"/>
    </location>
</feature>
<feature type="sequence conflict" description="In Ref. 2; BAC26731." evidence="7" ref="2">
    <original>P</original>
    <variation>T</variation>
    <location>
        <position position="1013"/>
    </location>
</feature>
<feature type="strand" evidence="10">
    <location>
        <begin position="33"/>
        <end position="36"/>
    </location>
</feature>
<feature type="strand" evidence="10">
    <location>
        <begin position="46"/>
        <end position="51"/>
    </location>
</feature>
<feature type="strand" evidence="10">
    <location>
        <begin position="56"/>
        <end position="62"/>
    </location>
</feature>
<feature type="strand" evidence="10">
    <location>
        <begin position="64"/>
        <end position="66"/>
    </location>
</feature>
<feature type="helix" evidence="10">
    <location>
        <begin position="73"/>
        <end position="79"/>
    </location>
</feature>
<feature type="strand" evidence="10">
    <location>
        <begin position="85"/>
        <end position="89"/>
    </location>
</feature>
<feature type="strand" evidence="10">
    <location>
        <begin position="94"/>
        <end position="98"/>
    </location>
</feature>
<feature type="turn" evidence="10">
    <location>
        <begin position="104"/>
        <end position="106"/>
    </location>
</feature>
<feature type="strand" evidence="10">
    <location>
        <begin position="108"/>
        <end position="114"/>
    </location>
</feature>
<feature type="helix" evidence="10">
    <location>
        <begin position="116"/>
        <end position="118"/>
    </location>
</feature>
<feature type="strand" evidence="10">
    <location>
        <begin position="131"/>
        <end position="137"/>
    </location>
</feature>
<feature type="strand" evidence="10">
    <location>
        <begin position="139"/>
        <end position="141"/>
    </location>
</feature>
<feature type="strand" evidence="10">
    <location>
        <begin position="144"/>
        <end position="152"/>
    </location>
</feature>
<feature type="turn" evidence="10">
    <location>
        <begin position="153"/>
        <end position="155"/>
    </location>
</feature>
<feature type="helix" evidence="10">
    <location>
        <begin position="157"/>
        <end position="160"/>
    </location>
</feature>
<feature type="strand" evidence="10">
    <location>
        <begin position="164"/>
        <end position="166"/>
    </location>
</feature>
<feature type="turn" evidence="10">
    <location>
        <begin position="169"/>
        <end position="171"/>
    </location>
</feature>
<feature type="helix" evidence="10">
    <location>
        <begin position="173"/>
        <end position="178"/>
    </location>
</feature>
<feature type="strand" evidence="10">
    <location>
        <begin position="179"/>
        <end position="185"/>
    </location>
</feature>
<feature type="strand" evidence="10">
    <location>
        <begin position="188"/>
        <end position="190"/>
    </location>
</feature>
<feature type="strand" evidence="10">
    <location>
        <begin position="195"/>
        <end position="200"/>
    </location>
</feature>
<feature type="strand" evidence="10">
    <location>
        <begin position="208"/>
        <end position="226"/>
    </location>
</feature>
<feature type="helix" evidence="10">
    <location>
        <begin position="228"/>
        <end position="234"/>
    </location>
</feature>
<feature type="strand" evidence="10">
    <location>
        <begin position="244"/>
        <end position="249"/>
    </location>
</feature>
<feature type="strand" evidence="10">
    <location>
        <begin position="254"/>
        <end position="258"/>
    </location>
</feature>
<feature type="strand" evidence="10">
    <location>
        <begin position="261"/>
        <end position="266"/>
    </location>
</feature>
<feature type="strand" evidence="10">
    <location>
        <begin position="268"/>
        <end position="270"/>
    </location>
</feature>
<feature type="strand" evidence="10">
    <location>
        <begin position="273"/>
        <end position="275"/>
    </location>
</feature>
<feature type="strand" evidence="10">
    <location>
        <begin position="278"/>
        <end position="281"/>
    </location>
</feature>
<feature type="helix" evidence="10">
    <location>
        <begin position="288"/>
        <end position="292"/>
    </location>
</feature>
<feature type="strand" evidence="10">
    <location>
        <begin position="294"/>
        <end position="298"/>
    </location>
</feature>
<feature type="strand" evidence="10">
    <location>
        <begin position="314"/>
        <end position="318"/>
    </location>
</feature>
<feature type="strand" evidence="10">
    <location>
        <begin position="329"/>
        <end position="333"/>
    </location>
</feature>
<feature type="strand" evidence="10">
    <location>
        <begin position="355"/>
        <end position="363"/>
    </location>
</feature>
<feature type="turn" evidence="10">
    <location>
        <begin position="364"/>
        <end position="367"/>
    </location>
</feature>
<feature type="strand" evidence="10">
    <location>
        <begin position="368"/>
        <end position="375"/>
    </location>
</feature>
<feature type="strand" evidence="10">
    <location>
        <begin position="381"/>
        <end position="389"/>
    </location>
</feature>
<feature type="strand" evidence="10">
    <location>
        <begin position="398"/>
        <end position="403"/>
    </location>
</feature>
<feature type="strand" evidence="10">
    <location>
        <begin position="411"/>
        <end position="416"/>
    </location>
</feature>
<feature type="strand" evidence="10">
    <location>
        <begin position="423"/>
        <end position="434"/>
    </location>
</feature>
<feature type="turn" evidence="10">
    <location>
        <begin position="435"/>
        <end position="438"/>
    </location>
</feature>
<feature type="strand" evidence="10">
    <location>
        <begin position="441"/>
        <end position="445"/>
    </location>
</feature>
<feature type="strand" evidence="10">
    <location>
        <begin position="451"/>
        <end position="456"/>
    </location>
</feature>
<feature type="strand" evidence="10">
    <location>
        <begin position="462"/>
        <end position="467"/>
    </location>
</feature>
<feature type="strand" evidence="10">
    <location>
        <begin position="470"/>
        <end position="476"/>
    </location>
</feature>
<feature type="strand" evidence="10">
    <location>
        <begin position="483"/>
        <end position="487"/>
    </location>
</feature>
<feature type="strand" evidence="10">
    <location>
        <begin position="494"/>
        <end position="497"/>
    </location>
</feature>
<feature type="strand" evidence="10">
    <location>
        <begin position="503"/>
        <end position="507"/>
    </location>
</feature>
<feature type="strand" evidence="10">
    <location>
        <begin position="510"/>
        <end position="512"/>
    </location>
</feature>
<feature type="strand" evidence="10">
    <location>
        <begin position="525"/>
        <end position="529"/>
    </location>
</feature>
<feature type="strand" evidence="10">
    <location>
        <begin position="538"/>
        <end position="554"/>
    </location>
</feature>
<feature type="helix" evidence="10">
    <location>
        <begin position="561"/>
        <end position="567"/>
    </location>
</feature>
<feature type="helix" evidence="10">
    <location>
        <begin position="571"/>
        <end position="573"/>
    </location>
</feature>
<feature type="strand" evidence="10">
    <location>
        <begin position="576"/>
        <end position="579"/>
    </location>
</feature>
<feature type="strand" evidence="10">
    <location>
        <begin position="581"/>
        <end position="583"/>
    </location>
</feature>
<feature type="strand" evidence="10">
    <location>
        <begin position="585"/>
        <end position="593"/>
    </location>
</feature>
<feature type="strand" evidence="10">
    <location>
        <begin position="595"/>
        <end position="598"/>
    </location>
</feature>
<feature type="strand" evidence="10">
    <location>
        <begin position="601"/>
        <end position="611"/>
    </location>
</feature>
<feature type="turn" evidence="10">
    <location>
        <begin position="618"/>
        <end position="620"/>
    </location>
</feature>
<feature type="helix" evidence="10">
    <location>
        <begin position="622"/>
        <end position="624"/>
    </location>
</feature>
<feature type="strand" evidence="10">
    <location>
        <begin position="628"/>
        <end position="632"/>
    </location>
</feature>
<feature type="strand" evidence="10">
    <location>
        <begin position="634"/>
        <end position="636"/>
    </location>
</feature>
<feature type="strand" evidence="10">
    <location>
        <begin position="638"/>
        <end position="643"/>
    </location>
</feature>
<feature type="strand" evidence="10">
    <location>
        <begin position="656"/>
        <end position="661"/>
    </location>
</feature>
<feature type="strand" evidence="10">
    <location>
        <begin position="667"/>
        <end position="673"/>
    </location>
</feature>
<feature type="strand" evidence="10">
    <location>
        <begin position="675"/>
        <end position="685"/>
    </location>
</feature>
<feature type="helix" evidence="10">
    <location>
        <begin position="686"/>
        <end position="688"/>
    </location>
</feature>
<feature type="strand" evidence="10">
    <location>
        <begin position="693"/>
        <end position="695"/>
    </location>
</feature>
<feature type="helix" evidence="10">
    <location>
        <begin position="697"/>
        <end position="699"/>
    </location>
</feature>
<feature type="strand" evidence="10">
    <location>
        <begin position="700"/>
        <end position="703"/>
    </location>
</feature>
<feature type="strand" evidence="10">
    <location>
        <begin position="714"/>
        <end position="717"/>
    </location>
</feature>
<feature type="strand" evidence="10">
    <location>
        <begin position="722"/>
        <end position="725"/>
    </location>
</feature>
<feature type="strand" evidence="10">
    <location>
        <begin position="733"/>
        <end position="735"/>
    </location>
</feature>
<feature type="strand" evidence="10">
    <location>
        <begin position="737"/>
        <end position="740"/>
    </location>
</feature>
<feature type="strand" evidence="10">
    <location>
        <begin position="745"/>
        <end position="756"/>
    </location>
</feature>
<feature type="strand" evidence="10">
    <location>
        <begin position="766"/>
        <end position="770"/>
    </location>
</feature>
<feature type="strand" evidence="10">
    <location>
        <begin position="774"/>
        <end position="783"/>
    </location>
</feature>
<feature type="strand" evidence="10">
    <location>
        <begin position="789"/>
        <end position="797"/>
    </location>
</feature>
<feature type="strand" evidence="10">
    <location>
        <begin position="803"/>
        <end position="810"/>
    </location>
</feature>
<feature type="strand" evidence="10">
    <location>
        <begin position="812"/>
        <end position="814"/>
    </location>
</feature>
<feature type="strand" evidence="10">
    <location>
        <begin position="826"/>
        <end position="830"/>
    </location>
</feature>
<feature type="strand" evidence="10">
    <location>
        <begin position="836"/>
        <end position="839"/>
    </location>
</feature>
<feature type="helix" evidence="10">
    <location>
        <begin position="847"/>
        <end position="852"/>
    </location>
</feature>
<feature type="strand" evidence="10">
    <location>
        <begin position="858"/>
        <end position="860"/>
    </location>
</feature>
<feature type="strand" evidence="10">
    <location>
        <begin position="862"/>
        <end position="866"/>
    </location>
</feature>
<feature type="strand" evidence="10">
    <location>
        <begin position="892"/>
        <end position="894"/>
    </location>
</feature>
<feature type="helix" evidence="10">
    <location>
        <begin position="903"/>
        <end position="906"/>
    </location>
</feature>
<feature type="strand" evidence="10">
    <location>
        <begin position="911"/>
        <end position="913"/>
    </location>
</feature>
<feature type="turn" evidence="10">
    <location>
        <begin position="919"/>
        <end position="921"/>
    </location>
</feature>
<feature type="helix" evidence="10">
    <location>
        <begin position="926"/>
        <end position="930"/>
    </location>
</feature>
<feature type="helix" evidence="10">
    <location>
        <begin position="937"/>
        <end position="939"/>
    </location>
</feature>
<feature type="strand" evidence="10">
    <location>
        <begin position="942"/>
        <end position="946"/>
    </location>
</feature>
<feature type="strand" evidence="10">
    <location>
        <begin position="948"/>
        <end position="954"/>
    </location>
</feature>
<feature type="strand" evidence="10">
    <location>
        <begin position="957"/>
        <end position="961"/>
    </location>
</feature>
<feature type="strand" evidence="10">
    <location>
        <begin position="964"/>
        <end position="967"/>
    </location>
</feature>
<feature type="strand" evidence="10">
    <location>
        <begin position="974"/>
        <end position="978"/>
    </location>
</feature>
<feature type="strand" evidence="10">
    <location>
        <begin position="985"/>
        <end position="988"/>
    </location>
</feature>
<feature type="helix" evidence="10">
    <location>
        <begin position="998"/>
        <end position="1006"/>
    </location>
</feature>
<feature type="strand" evidence="10">
    <location>
        <begin position="1017"/>
        <end position="1020"/>
    </location>
</feature>
<feature type="strand" evidence="10">
    <location>
        <begin position="1023"/>
        <end position="1032"/>
    </location>
</feature>
<feature type="strand" evidence="10">
    <location>
        <begin position="1042"/>
        <end position="1049"/>
    </location>
</feature>
<feature type="helix" evidence="10">
    <location>
        <begin position="1060"/>
        <end position="1085"/>
    </location>
</feature>
<keyword id="KW-0002">3D-structure</keyword>
<keyword id="KW-1003">Cell membrane</keyword>
<keyword id="KW-0966">Cell projection</keyword>
<keyword id="KW-0969">Cilium</keyword>
<keyword id="KW-0217">Developmental protein</keyword>
<keyword id="KW-0221">Differentiation</keyword>
<keyword id="KW-1015">Disulfide bond</keyword>
<keyword id="KW-0282">Flagellum</keyword>
<keyword id="KW-0325">Glycoprotein</keyword>
<keyword id="KW-0472">Membrane</keyword>
<keyword id="KW-1185">Reference proteome</keyword>
<keyword id="KW-0744">Spermatogenesis</keyword>
<keyword id="KW-0812">Transmembrane</keyword>
<keyword id="KW-1133">Transmembrane helix</keyword>
<gene>
    <name evidence="8" type="primary">Catsperb</name>
</gene>
<protein>
    <recommendedName>
        <fullName evidence="8">Cation channel sperm-associated auxiliary subunit beta</fullName>
        <shortName>CatSper-beta</shortName>
    </recommendedName>
</protein>
<dbReference type="EMBL" id="EF199807">
    <property type="protein sequence ID" value="ABO93459.1"/>
    <property type="molecule type" value="mRNA"/>
</dbReference>
<dbReference type="EMBL" id="AK030010">
    <property type="protein sequence ID" value="BAC26731.1"/>
    <property type="molecule type" value="mRNA"/>
</dbReference>
<dbReference type="EMBL" id="BC132479">
    <property type="protein sequence ID" value="AAI32480.1"/>
    <property type="molecule type" value="mRNA"/>
</dbReference>
<dbReference type="CCDS" id="CCDS26112.1"/>
<dbReference type="RefSeq" id="NP_766611.2">
    <property type="nucleotide sequence ID" value="NM_173023.2"/>
</dbReference>
<dbReference type="PDB" id="7EEB">
    <property type="method" value="EM"/>
    <property type="resolution" value="2.90 A"/>
    <property type="chains" value="E=1-1109"/>
</dbReference>
<dbReference type="PDBsum" id="7EEB"/>
<dbReference type="EMDB" id="EMD-31076"/>
<dbReference type="SMR" id="A2RTF1"/>
<dbReference type="BioGRID" id="234824">
    <property type="interactions" value="3"/>
</dbReference>
<dbReference type="ComplexPortal" id="CPX-9078">
    <property type="entry name" value="CatSpermasome complex, gamma subunit variant 2"/>
</dbReference>
<dbReference type="CORUM" id="A2RTF1"/>
<dbReference type="FunCoup" id="A2RTF1">
    <property type="interactions" value="15"/>
</dbReference>
<dbReference type="STRING" id="10090.ENSMUSP00000052089"/>
<dbReference type="TCDB" id="1.A.1.19.3">
    <property type="family name" value="the voltage-gated ion channel (vic) superfamily"/>
</dbReference>
<dbReference type="GlyCosmos" id="A2RTF1">
    <property type="glycosylation" value="8 sites, No reported glycans"/>
</dbReference>
<dbReference type="GlyGen" id="A2RTF1">
    <property type="glycosylation" value="8 sites, 2 N-linked glycans (2 sites)"/>
</dbReference>
<dbReference type="iPTMnet" id="A2RTF1"/>
<dbReference type="PhosphoSitePlus" id="A2RTF1"/>
<dbReference type="SwissPalm" id="A2RTF1"/>
<dbReference type="PaxDb" id="10090-ENSMUSP00000052089"/>
<dbReference type="ProteomicsDB" id="279290"/>
<dbReference type="Antibodypedia" id="49510">
    <property type="antibodies" value="38 antibodies from 15 providers"/>
</dbReference>
<dbReference type="DNASU" id="271036"/>
<dbReference type="Ensembl" id="ENSMUST00000055156.5">
    <property type="protein sequence ID" value="ENSMUSP00000052089.4"/>
    <property type="gene ID" value="ENSMUSG00000047014.8"/>
</dbReference>
<dbReference type="GeneID" id="271036"/>
<dbReference type="KEGG" id="mmu:271036"/>
<dbReference type="UCSC" id="uc007otl.2">
    <property type="organism name" value="mouse"/>
</dbReference>
<dbReference type="AGR" id="MGI:2443988"/>
<dbReference type="CTD" id="79820"/>
<dbReference type="MGI" id="MGI:2443988">
    <property type="gene designation" value="Catsperb"/>
</dbReference>
<dbReference type="VEuPathDB" id="HostDB:ENSMUSG00000047014"/>
<dbReference type="eggNOG" id="ENOG502QZ5S">
    <property type="taxonomic scope" value="Eukaryota"/>
</dbReference>
<dbReference type="GeneTree" id="ENSGT00390000008198"/>
<dbReference type="HOGENOM" id="CLU_012454_0_0_1"/>
<dbReference type="InParanoid" id="A2RTF1"/>
<dbReference type="OMA" id="KEPFLEW"/>
<dbReference type="OrthoDB" id="2159869at2759"/>
<dbReference type="PhylomeDB" id="A2RTF1"/>
<dbReference type="TreeFam" id="TF328432"/>
<dbReference type="Reactome" id="R-MMU-1300642">
    <property type="pathway name" value="Sperm Motility And Taxes"/>
</dbReference>
<dbReference type="BioGRID-ORCS" id="271036">
    <property type="hits" value="3 hits in 76 CRISPR screens"/>
</dbReference>
<dbReference type="PRO" id="PR:A2RTF1"/>
<dbReference type="Proteomes" id="UP000000589">
    <property type="component" value="Chromosome 12"/>
</dbReference>
<dbReference type="RNAct" id="A2RTF1">
    <property type="molecule type" value="protein"/>
</dbReference>
<dbReference type="Bgee" id="ENSMUSG00000047014">
    <property type="expression patterns" value="Expressed in spermatocyte and 4 other cell types or tissues"/>
</dbReference>
<dbReference type="ExpressionAtlas" id="A2RTF1">
    <property type="expression patterns" value="baseline and differential"/>
</dbReference>
<dbReference type="GO" id="GO:0036128">
    <property type="term" value="C:CatSper complex"/>
    <property type="evidence" value="ECO:0000314"/>
    <property type="project" value="UniProtKB"/>
</dbReference>
<dbReference type="GO" id="GO:0005929">
    <property type="term" value="C:cilium"/>
    <property type="evidence" value="ECO:0000314"/>
    <property type="project" value="MGI"/>
</dbReference>
<dbReference type="GO" id="GO:0034702">
    <property type="term" value="C:monoatomic ion channel complex"/>
    <property type="evidence" value="ECO:0000304"/>
    <property type="project" value="MGI"/>
</dbReference>
<dbReference type="GO" id="GO:0097228">
    <property type="term" value="C:sperm principal piece"/>
    <property type="evidence" value="ECO:0000314"/>
    <property type="project" value="UniProtKB"/>
</dbReference>
<dbReference type="GO" id="GO:0048240">
    <property type="term" value="P:sperm capacitation"/>
    <property type="evidence" value="ECO:0000304"/>
    <property type="project" value="MGI"/>
</dbReference>
<dbReference type="InterPro" id="IPR028748">
    <property type="entry name" value="CATSPERB"/>
</dbReference>
<dbReference type="InterPro" id="IPR048788">
    <property type="entry name" value="CATSPERB_2nd"/>
</dbReference>
<dbReference type="InterPro" id="IPR048789">
    <property type="entry name" value="CATSPERB_C"/>
</dbReference>
<dbReference type="InterPro" id="IPR053903">
    <property type="entry name" value="CATSPERB_head"/>
</dbReference>
<dbReference type="InterPro" id="IPR053904">
    <property type="entry name" value="CATSPERB_Ig-like"/>
</dbReference>
<dbReference type="InterPro" id="IPR048786">
    <property type="entry name" value="CATSPERB_N"/>
</dbReference>
<dbReference type="PANTHER" id="PTHR14705:SF0">
    <property type="entry name" value="CATION CHANNEL SPERM-ASSOCIATED AUXILIARY SUBUNIT BETA"/>
    <property type="match status" value="1"/>
</dbReference>
<dbReference type="PANTHER" id="PTHR14705">
    <property type="entry name" value="CATION CHANNEL SPERM-ASSOCIATED PROTEIN SUBUNIT BETA"/>
    <property type="match status" value="1"/>
</dbReference>
<dbReference type="Pfam" id="PF21541">
    <property type="entry name" value="CATSPERB_1st"/>
    <property type="match status" value="1"/>
</dbReference>
<dbReference type="Pfam" id="PF21548">
    <property type="entry name" value="CATSPERB_2nd"/>
    <property type="match status" value="1"/>
</dbReference>
<dbReference type="Pfam" id="PF15149">
    <property type="entry name" value="CATSPERB_C"/>
    <property type="match status" value="1"/>
</dbReference>
<dbReference type="Pfam" id="PF22830">
    <property type="entry name" value="CATSPERB_head"/>
    <property type="match status" value="1"/>
</dbReference>
<dbReference type="Pfam" id="PF22831">
    <property type="entry name" value="CATSPERB_Ig-like"/>
    <property type="match status" value="1"/>
</dbReference>
<accession>A2RTF1</accession>
<accession>Q8C0R2</accession>
<sequence length="1109" mass="126108">MESPLIYVMLVLLNVFVFSSGVIHNKGKERTYFSCSGEGILTGLHTIKLFLTMDNLKVRCFFRNENQSPSKEILGLFTSGGLAPNMIITNSTFYGGYYFKLTPFSNRLEWLIDIPRQNITVNTDIAAVEQWMIKITMHEGLNIYDTEGTLLDLVREPILQWNLGRVLTEMEVRDLYPEVNDIKVTKSPCANDVALIGFMMKPSSNGVFIGKTISGFWTYKECIWHDLTEIIYAELKDEHQGLTVIDLVLTNHFLVILTSLGLYVSSDLRYPTTSQIKLSRAEFCGFERVDYIRGNLWYNEKCFANRESFEVDYVTITFNRNRTLSESSSCFFSKEPFLHWLPCVFSTIKNEKSIPRVITFLIDQETDSGIYLFNVQDTKETYVTVAMLKDGKPSPRPKFPSFHFPSTFTLPLGMIFHPRSHFLYVYGSQIWVSMDGGNTFEMLCNLFSHHVTKTSNSFYTSDIVFIVEDGRILTTKAGLTTYSELGILKDAIFTLYYDQLGYIHKLTPENFDAGSKLLGHGNSGSIFGKRPDLGFEAILVPQYISTNEMYFFAHVPLTMPTNIQWKKRFKTIHLGKTIEFSKTGLANIKNVYMHKTEPVGFQTSIHTEIIVPFGIENSKDSPCLLSDLEITYSGKLYYTIKLLSKNPLHELKSTDVEKSVLIPGYSSFLIMNITDKWTASALATMPQAIKSNLKFLTGSWFLYNFGTAGGRKWSISTRQCNYWIQQDSLDFMSLNLVKYIDVGNTIDFQFKIIPKAMSTFPIPPVSMVVGNPGLVEVKTQGVFDLNENYYLDIHVSGRFFQKGSTSIALVLWEGSSKCYAITLLPTIKSSCSYLRTMHHTPGRHIPPEDWISGVHKDSQGFNMIKTLPINYRPPSHMGISIPLTDNFYHADPSKPIPRNQFHKSKETGKYKQCANVTSRAMCNCSEHQKFSHAVAFSDCKEKVHRFKFPVTQYPVVLEIFNERDKISAEPPYLVTMTEVNMRKNWQLKHNEPENVKKMKHYLEPLLKTPVYNPLGLNLTIQGSELFHFKVSVVPGVSFCELSEEFQIYVDEVPLPFPGHALIAVATSVVLGVLIFIAFVFQLRNIHPLKALKKSIRGNPGLTSSTTVSS</sequence>
<proteinExistence type="evidence at protein level"/>
<comment type="function">
    <text evidence="2 5">Auxiliary component of the CatSper complex, a complex involved in sperm cell hyperactivation (PubMed:17478420, PubMed:34225353). Sperm cell hyperactivation is needed for sperm motility which is essential late in the preparation of sperm for fertilization (PubMed:17478420).</text>
</comment>
<comment type="subunit">
    <text evidence="2 3 4 5 6">Component of the CatSper complex or CatSpermasome composed of the core pore-forming members CATSPER1, CATSPER2, CATSPER3 and CATSPER4 as well as auxiliary members CATSPERB, CATSPERG2, CATSPERD, CATSPERE, CATSPERZ, C2CD6/CATSPERT, SLCO6C1, TMEM249, TMEM262 and EFCAB9 (PubMed:17478420, PubMed:19516020, PubMed:21224844, PubMed:34225353, PubMed:34998468). HSPA1 may be an additional auxiliary complex member (PubMed:17478420, PubMed:19516020). The core complex members CATSPER1, CATSPER2, CATSPER3 and CATSPER4 form a heterotetrameric channel (PubMed:34225353). The auxiliary CATSPERB, CATSPERG2, CATSPERD and CATSPERE subunits form a pavilion-like structure over the pore which stabilizes the complex through interactions with CATSPER4, CATSPER3, CATSPER1 and CATSPER2 respectively (PubMed:34225353). SLCO6C1 interacts with CATSPERE and TMEM262/CATSPERH interacts with CATSPERB, further stabilizing the complex (PubMed:34225353). C2CD6/CATSPERT interacts at least with CATSPERD and is required for targeting the CatSper complex in the flagellar membrane (PubMed:34998468).</text>
</comment>
<comment type="subcellular location">
    <subcellularLocation>
        <location evidence="2 5">Cell projection</location>
        <location evidence="2 5">Cilium</location>
        <location evidence="2 5">Flagellum membrane</location>
        <topology evidence="5">Single-pass membrane protein</topology>
    </subcellularLocation>
    <text evidence="2 5">Predominantly located in the principal piece of the sperm tail.</text>
</comment>
<comment type="tissue specificity">
    <text evidence="2">Testis-specific. Specifically present in the principal piece of sperm tail (at protein level). Specifically expressed in the seminiferous tubules but not in the interstitial cells. Within the tubules, it is expressed in spermatocytes and spermatids, but not in spermatogonia.</text>
</comment>
<comment type="miscellaneous">
    <text evidence="2">CatSperb is absent in sperm from mice lacking CatSper1, suggesting that stable expression of CatSperb protein requires CatSper1.</text>
</comment>
<name>CTSRB_MOUSE</name>